<reference key="1">
    <citation type="journal article" date="2001" name="Nature">
        <title>Genome sequence of Yersinia pestis, the causative agent of plague.</title>
        <authorList>
            <person name="Parkhill J."/>
            <person name="Wren B.W."/>
            <person name="Thomson N.R."/>
            <person name="Titball R.W."/>
            <person name="Holden M.T.G."/>
            <person name="Prentice M.B."/>
            <person name="Sebaihia M."/>
            <person name="James K.D."/>
            <person name="Churcher C.M."/>
            <person name="Mungall K.L."/>
            <person name="Baker S."/>
            <person name="Basham D."/>
            <person name="Bentley S.D."/>
            <person name="Brooks K."/>
            <person name="Cerdeno-Tarraga A.-M."/>
            <person name="Chillingworth T."/>
            <person name="Cronin A."/>
            <person name="Davies R.M."/>
            <person name="Davis P."/>
            <person name="Dougan G."/>
            <person name="Feltwell T."/>
            <person name="Hamlin N."/>
            <person name="Holroyd S."/>
            <person name="Jagels K."/>
            <person name="Karlyshev A.V."/>
            <person name="Leather S."/>
            <person name="Moule S."/>
            <person name="Oyston P.C.F."/>
            <person name="Quail M.A."/>
            <person name="Rutherford K.M."/>
            <person name="Simmonds M."/>
            <person name="Skelton J."/>
            <person name="Stevens K."/>
            <person name="Whitehead S."/>
            <person name="Barrell B.G."/>
        </authorList>
    </citation>
    <scope>NUCLEOTIDE SEQUENCE [LARGE SCALE GENOMIC DNA]</scope>
    <source>
        <strain>CO-92 / Biovar Orientalis</strain>
    </source>
</reference>
<reference key="2">
    <citation type="journal article" date="2002" name="J. Bacteriol.">
        <title>Genome sequence of Yersinia pestis KIM.</title>
        <authorList>
            <person name="Deng W."/>
            <person name="Burland V."/>
            <person name="Plunkett G. III"/>
            <person name="Boutin A."/>
            <person name="Mayhew G.F."/>
            <person name="Liss P."/>
            <person name="Perna N.T."/>
            <person name="Rose D.J."/>
            <person name="Mau B."/>
            <person name="Zhou S."/>
            <person name="Schwartz D.C."/>
            <person name="Fetherston J.D."/>
            <person name="Lindler L.E."/>
            <person name="Brubaker R.R."/>
            <person name="Plano G.V."/>
            <person name="Straley S.C."/>
            <person name="McDonough K.A."/>
            <person name="Nilles M.L."/>
            <person name="Matson J.S."/>
            <person name="Blattner F.R."/>
            <person name="Perry R.D."/>
        </authorList>
    </citation>
    <scope>NUCLEOTIDE SEQUENCE [LARGE SCALE GENOMIC DNA]</scope>
    <source>
        <strain>KIM10+ / Biovar Mediaevalis</strain>
    </source>
</reference>
<reference key="3">
    <citation type="journal article" date="2004" name="DNA Res.">
        <title>Complete genome sequence of Yersinia pestis strain 91001, an isolate avirulent to humans.</title>
        <authorList>
            <person name="Song Y."/>
            <person name="Tong Z."/>
            <person name="Wang J."/>
            <person name="Wang L."/>
            <person name="Guo Z."/>
            <person name="Han Y."/>
            <person name="Zhang J."/>
            <person name="Pei D."/>
            <person name="Zhou D."/>
            <person name="Qin H."/>
            <person name="Pang X."/>
            <person name="Han Y."/>
            <person name="Zhai J."/>
            <person name="Li M."/>
            <person name="Cui B."/>
            <person name="Qi Z."/>
            <person name="Jin L."/>
            <person name="Dai R."/>
            <person name="Chen F."/>
            <person name="Li S."/>
            <person name="Ye C."/>
            <person name="Du Z."/>
            <person name="Lin W."/>
            <person name="Wang J."/>
            <person name="Yu J."/>
            <person name="Yang H."/>
            <person name="Wang J."/>
            <person name="Huang P."/>
            <person name="Yang R."/>
        </authorList>
    </citation>
    <scope>NUCLEOTIDE SEQUENCE [LARGE SCALE GENOMIC DNA]</scope>
    <source>
        <strain>91001 / Biovar Mediaevalis</strain>
    </source>
</reference>
<name>ILVC_YERPE</name>
<gene>
    <name evidence="1" type="primary">ilvC</name>
    <name type="ordered locus">YPO3888</name>
    <name type="ordered locus">y0345</name>
    <name type="ordered locus">YP_3158</name>
</gene>
<comment type="function">
    <text evidence="1">Involved in the biosynthesis of branched-chain amino acids (BCAA). Catalyzes an alkyl-migration followed by a ketol-acid reduction of (S)-2-acetolactate (S2AL) to yield (R)-2,3-dihydroxy-isovalerate. In the isomerase reaction, S2AL is rearranged via a Mg-dependent methyl migration to produce 3-hydroxy-3-methyl-2-ketobutyrate (HMKB). In the reductase reaction, this 2-ketoacid undergoes a metal-dependent reduction by NADPH to yield (R)-2,3-dihydroxy-isovalerate.</text>
</comment>
<comment type="catalytic activity">
    <reaction evidence="1">
        <text>(2R)-2,3-dihydroxy-3-methylbutanoate + NADP(+) = (2S)-2-acetolactate + NADPH + H(+)</text>
        <dbReference type="Rhea" id="RHEA:22068"/>
        <dbReference type="ChEBI" id="CHEBI:15378"/>
        <dbReference type="ChEBI" id="CHEBI:49072"/>
        <dbReference type="ChEBI" id="CHEBI:57783"/>
        <dbReference type="ChEBI" id="CHEBI:58349"/>
        <dbReference type="ChEBI" id="CHEBI:58476"/>
        <dbReference type="EC" id="1.1.1.86"/>
    </reaction>
</comment>
<comment type="catalytic activity">
    <reaction evidence="1">
        <text>(2R,3R)-2,3-dihydroxy-3-methylpentanoate + NADP(+) = (S)-2-ethyl-2-hydroxy-3-oxobutanoate + NADPH + H(+)</text>
        <dbReference type="Rhea" id="RHEA:13493"/>
        <dbReference type="ChEBI" id="CHEBI:15378"/>
        <dbReference type="ChEBI" id="CHEBI:49256"/>
        <dbReference type="ChEBI" id="CHEBI:49258"/>
        <dbReference type="ChEBI" id="CHEBI:57783"/>
        <dbReference type="ChEBI" id="CHEBI:58349"/>
        <dbReference type="EC" id="1.1.1.86"/>
    </reaction>
</comment>
<comment type="cofactor">
    <cofactor evidence="1">
        <name>Mg(2+)</name>
        <dbReference type="ChEBI" id="CHEBI:18420"/>
    </cofactor>
    <text evidence="1">Binds 2 magnesium ions per subunit.</text>
</comment>
<comment type="pathway">
    <text evidence="1">Amino-acid biosynthesis; L-isoleucine biosynthesis; L-isoleucine from 2-oxobutanoate: step 2/4.</text>
</comment>
<comment type="pathway">
    <text evidence="1">Amino-acid biosynthesis; L-valine biosynthesis; L-valine from pyruvate: step 2/4.</text>
</comment>
<comment type="similarity">
    <text evidence="1">Belongs to the ketol-acid reductoisomerase family.</text>
</comment>
<feature type="chain" id="PRO_0000151387" description="Ketol-acid reductoisomerase (NADP(+))">
    <location>
        <begin position="1"/>
        <end position="492"/>
    </location>
</feature>
<feature type="domain" description="KARI N-terminal Rossmann" evidence="2">
    <location>
        <begin position="15"/>
        <end position="208"/>
    </location>
</feature>
<feature type="domain" description="KARI C-terminal knotted 1" evidence="3">
    <location>
        <begin position="209"/>
        <end position="344"/>
    </location>
</feature>
<feature type="domain" description="KARI C-terminal knotted 2" evidence="3">
    <location>
        <begin position="345"/>
        <end position="485"/>
    </location>
</feature>
<feature type="active site" evidence="1">
    <location>
        <position position="132"/>
    </location>
</feature>
<feature type="binding site" evidence="1">
    <location>
        <begin position="45"/>
        <end position="48"/>
    </location>
    <ligand>
        <name>NADP(+)</name>
        <dbReference type="ChEBI" id="CHEBI:58349"/>
    </ligand>
</feature>
<feature type="binding site" evidence="1">
    <location>
        <position position="68"/>
    </location>
    <ligand>
        <name>NADP(+)</name>
        <dbReference type="ChEBI" id="CHEBI:58349"/>
    </ligand>
</feature>
<feature type="binding site" evidence="1">
    <location>
        <position position="76"/>
    </location>
    <ligand>
        <name>NADP(+)</name>
        <dbReference type="ChEBI" id="CHEBI:58349"/>
    </ligand>
</feature>
<feature type="binding site" evidence="1">
    <location>
        <position position="78"/>
    </location>
    <ligand>
        <name>NADP(+)</name>
        <dbReference type="ChEBI" id="CHEBI:58349"/>
    </ligand>
</feature>
<feature type="binding site" evidence="1">
    <location>
        <begin position="108"/>
        <end position="110"/>
    </location>
    <ligand>
        <name>NADP(+)</name>
        <dbReference type="ChEBI" id="CHEBI:58349"/>
    </ligand>
</feature>
<feature type="binding site" evidence="1">
    <location>
        <position position="158"/>
    </location>
    <ligand>
        <name>NADP(+)</name>
        <dbReference type="ChEBI" id="CHEBI:58349"/>
    </ligand>
</feature>
<feature type="binding site" evidence="1">
    <location>
        <position position="217"/>
    </location>
    <ligand>
        <name>Mg(2+)</name>
        <dbReference type="ChEBI" id="CHEBI:18420"/>
        <label>1</label>
    </ligand>
</feature>
<feature type="binding site" evidence="1">
    <location>
        <position position="217"/>
    </location>
    <ligand>
        <name>Mg(2+)</name>
        <dbReference type="ChEBI" id="CHEBI:18420"/>
        <label>2</label>
    </ligand>
</feature>
<feature type="binding site" evidence="1">
    <location>
        <position position="221"/>
    </location>
    <ligand>
        <name>Mg(2+)</name>
        <dbReference type="ChEBI" id="CHEBI:18420"/>
        <label>1</label>
    </ligand>
</feature>
<feature type="binding site" evidence="1">
    <location>
        <position position="389"/>
    </location>
    <ligand>
        <name>Mg(2+)</name>
        <dbReference type="ChEBI" id="CHEBI:18420"/>
        <label>2</label>
    </ligand>
</feature>
<feature type="binding site" evidence="1">
    <location>
        <position position="393"/>
    </location>
    <ligand>
        <name>Mg(2+)</name>
        <dbReference type="ChEBI" id="CHEBI:18420"/>
        <label>2</label>
    </ligand>
</feature>
<feature type="binding site" evidence="1">
    <location>
        <position position="414"/>
    </location>
    <ligand>
        <name>substrate</name>
    </ligand>
</feature>
<sequence length="492" mass="53993">MANYFNTLNLRQQLAQLGKCRFMARDEFADEAGYLKGKKVVIVGCGAQGLNQGLNMRDSGLDVAYALRKEAIAEKRASWRKATENGFKVGTYEELIPQADLVVNLTPDKQHSAVVKAVQPLMKEGAALGYSHGFNIVEVGEQVRKDITVVMVAPKCPGTEVREEYKRGFGVPTLIAVHPENDPKGEGMAIAKAWAAATGGHRAGVLEFSFVAEVKSDLMGEQTILCGMLQAGSLLCFDKLVSEGTDAAYAEKLIQFGWETITEALKQGGITLMMDRLSNPAKLRAYALSEQLKEIMAPLFQKHMDDIISGAFSSGMMADWANDDVKLLNWREETGRTAFENAPQFEGKISEQEYFDHGVLMIAMVKAGVELAFETMVDSGIIEESAYYESLHELPLIANTIARKRLYEMNVVISDTAEYGNYLFANAAVPLLKEKFMDSLQAGDLGKSIPGSAVDNAQLRDVNEAIRNHPIEAVGHKLRGYMTDMKRIAVAG</sequence>
<evidence type="ECO:0000255" key="1">
    <source>
        <dbReference type="HAMAP-Rule" id="MF_00435"/>
    </source>
</evidence>
<evidence type="ECO:0000255" key="2">
    <source>
        <dbReference type="PROSITE-ProRule" id="PRU01197"/>
    </source>
</evidence>
<evidence type="ECO:0000255" key="3">
    <source>
        <dbReference type="PROSITE-ProRule" id="PRU01198"/>
    </source>
</evidence>
<dbReference type="EC" id="1.1.1.86" evidence="1"/>
<dbReference type="EMBL" id="AL590842">
    <property type="protein sequence ID" value="CAL22474.1"/>
    <property type="molecule type" value="Genomic_DNA"/>
</dbReference>
<dbReference type="EMBL" id="AE009952">
    <property type="protein sequence ID" value="AAM83935.1"/>
    <property type="molecule type" value="Genomic_DNA"/>
</dbReference>
<dbReference type="EMBL" id="AE017042">
    <property type="protein sequence ID" value="AAS63328.1"/>
    <property type="molecule type" value="Genomic_DNA"/>
</dbReference>
<dbReference type="PIR" id="AG0473">
    <property type="entry name" value="AG0473"/>
</dbReference>
<dbReference type="RefSeq" id="WP_002212007.1">
    <property type="nucleotide sequence ID" value="NZ_WUCM01000098.1"/>
</dbReference>
<dbReference type="RefSeq" id="YP_002348764.1">
    <property type="nucleotide sequence ID" value="NC_003143.1"/>
</dbReference>
<dbReference type="SMR" id="Q8ZAC2"/>
<dbReference type="IntAct" id="Q8ZAC2">
    <property type="interactions" value="3"/>
</dbReference>
<dbReference type="STRING" id="214092.YPO3888"/>
<dbReference type="PaxDb" id="214092-YPO3888"/>
<dbReference type="DNASU" id="1145292"/>
<dbReference type="EnsemblBacteria" id="AAS63328">
    <property type="protein sequence ID" value="AAS63328"/>
    <property type="gene ID" value="YP_3158"/>
</dbReference>
<dbReference type="GeneID" id="57974817"/>
<dbReference type="KEGG" id="ype:YPO3888"/>
<dbReference type="KEGG" id="ypk:y0345"/>
<dbReference type="KEGG" id="ypm:YP_3158"/>
<dbReference type="PATRIC" id="fig|214092.21.peg.4416"/>
<dbReference type="eggNOG" id="COG0059">
    <property type="taxonomic scope" value="Bacteria"/>
</dbReference>
<dbReference type="HOGENOM" id="CLU_551905_0_0_6"/>
<dbReference type="OMA" id="ILCFDKM"/>
<dbReference type="OrthoDB" id="9804088at2"/>
<dbReference type="UniPathway" id="UPA00047">
    <property type="reaction ID" value="UER00056"/>
</dbReference>
<dbReference type="UniPathway" id="UPA00049">
    <property type="reaction ID" value="UER00060"/>
</dbReference>
<dbReference type="Proteomes" id="UP000000815">
    <property type="component" value="Chromosome"/>
</dbReference>
<dbReference type="Proteomes" id="UP000001019">
    <property type="component" value="Chromosome"/>
</dbReference>
<dbReference type="Proteomes" id="UP000002490">
    <property type="component" value="Chromosome"/>
</dbReference>
<dbReference type="GO" id="GO:0005829">
    <property type="term" value="C:cytosol"/>
    <property type="evidence" value="ECO:0000318"/>
    <property type="project" value="GO_Central"/>
</dbReference>
<dbReference type="GO" id="GO:0004455">
    <property type="term" value="F:ketol-acid reductoisomerase activity"/>
    <property type="evidence" value="ECO:0000318"/>
    <property type="project" value="GO_Central"/>
</dbReference>
<dbReference type="GO" id="GO:0000287">
    <property type="term" value="F:magnesium ion binding"/>
    <property type="evidence" value="ECO:0007669"/>
    <property type="project" value="UniProtKB-UniRule"/>
</dbReference>
<dbReference type="GO" id="GO:0009097">
    <property type="term" value="P:isoleucine biosynthetic process"/>
    <property type="evidence" value="ECO:0000318"/>
    <property type="project" value="GO_Central"/>
</dbReference>
<dbReference type="GO" id="GO:0009099">
    <property type="term" value="P:L-valine biosynthetic process"/>
    <property type="evidence" value="ECO:0000318"/>
    <property type="project" value="GO_Central"/>
</dbReference>
<dbReference type="FunFam" id="1.10.1040.10:FF:000007">
    <property type="entry name" value="Ketol-acid reductoisomerase (NADP(+))"/>
    <property type="match status" value="1"/>
</dbReference>
<dbReference type="FunFam" id="3.40.50.720:FF:000043">
    <property type="entry name" value="Ketol-acid reductoisomerase (NADP(+))"/>
    <property type="match status" value="1"/>
</dbReference>
<dbReference type="Gene3D" id="1.10.1040.10">
    <property type="entry name" value="N-(1-d-carboxylethyl)-l-norvaline Dehydrogenase, domain 2"/>
    <property type="match status" value="1"/>
</dbReference>
<dbReference type="Gene3D" id="3.40.50.720">
    <property type="entry name" value="NAD(P)-binding Rossmann-like Domain"/>
    <property type="match status" value="1"/>
</dbReference>
<dbReference type="HAMAP" id="MF_00435">
    <property type="entry name" value="IlvC"/>
    <property type="match status" value="1"/>
</dbReference>
<dbReference type="InterPro" id="IPR008927">
    <property type="entry name" value="6-PGluconate_DH-like_C_sf"/>
</dbReference>
<dbReference type="InterPro" id="IPR013328">
    <property type="entry name" value="6PGD_dom2"/>
</dbReference>
<dbReference type="InterPro" id="IPR013023">
    <property type="entry name" value="KARI"/>
</dbReference>
<dbReference type="InterPro" id="IPR000506">
    <property type="entry name" value="KARI_C"/>
</dbReference>
<dbReference type="InterPro" id="IPR013116">
    <property type="entry name" value="KARI_N"/>
</dbReference>
<dbReference type="InterPro" id="IPR036291">
    <property type="entry name" value="NAD(P)-bd_dom_sf"/>
</dbReference>
<dbReference type="NCBIfam" id="TIGR00465">
    <property type="entry name" value="ilvC"/>
    <property type="match status" value="1"/>
</dbReference>
<dbReference type="NCBIfam" id="NF003557">
    <property type="entry name" value="PRK05225.1"/>
    <property type="match status" value="1"/>
</dbReference>
<dbReference type="PANTHER" id="PTHR21371">
    <property type="entry name" value="KETOL-ACID REDUCTOISOMERASE, MITOCHONDRIAL"/>
    <property type="match status" value="1"/>
</dbReference>
<dbReference type="PANTHER" id="PTHR21371:SF1">
    <property type="entry name" value="KETOL-ACID REDUCTOISOMERASE, MITOCHONDRIAL"/>
    <property type="match status" value="1"/>
</dbReference>
<dbReference type="Pfam" id="PF01450">
    <property type="entry name" value="KARI_C"/>
    <property type="match status" value="2"/>
</dbReference>
<dbReference type="Pfam" id="PF07991">
    <property type="entry name" value="KARI_N"/>
    <property type="match status" value="1"/>
</dbReference>
<dbReference type="SUPFAM" id="SSF48179">
    <property type="entry name" value="6-phosphogluconate dehydrogenase C-terminal domain-like"/>
    <property type="match status" value="2"/>
</dbReference>
<dbReference type="SUPFAM" id="SSF51735">
    <property type="entry name" value="NAD(P)-binding Rossmann-fold domains"/>
    <property type="match status" value="1"/>
</dbReference>
<dbReference type="PROSITE" id="PS51851">
    <property type="entry name" value="KARI_C"/>
    <property type="match status" value="2"/>
</dbReference>
<dbReference type="PROSITE" id="PS51850">
    <property type="entry name" value="KARI_N"/>
    <property type="match status" value="1"/>
</dbReference>
<organism>
    <name type="scientific">Yersinia pestis</name>
    <dbReference type="NCBI Taxonomy" id="632"/>
    <lineage>
        <taxon>Bacteria</taxon>
        <taxon>Pseudomonadati</taxon>
        <taxon>Pseudomonadota</taxon>
        <taxon>Gammaproteobacteria</taxon>
        <taxon>Enterobacterales</taxon>
        <taxon>Yersiniaceae</taxon>
        <taxon>Yersinia</taxon>
    </lineage>
</organism>
<keyword id="KW-0028">Amino-acid biosynthesis</keyword>
<keyword id="KW-0100">Branched-chain amino acid biosynthesis</keyword>
<keyword id="KW-0460">Magnesium</keyword>
<keyword id="KW-0479">Metal-binding</keyword>
<keyword id="KW-0521">NADP</keyword>
<keyword id="KW-0560">Oxidoreductase</keyword>
<keyword id="KW-1185">Reference proteome</keyword>
<keyword id="KW-0677">Repeat</keyword>
<proteinExistence type="inferred from homology"/>
<protein>
    <recommendedName>
        <fullName evidence="1">Ketol-acid reductoisomerase (NADP(+))</fullName>
        <shortName evidence="1">KARI</shortName>
        <ecNumber evidence="1">1.1.1.86</ecNumber>
    </recommendedName>
    <alternativeName>
        <fullName evidence="1">Acetohydroxy-acid isomeroreductase</fullName>
        <shortName evidence="1">AHIR</shortName>
    </alternativeName>
    <alternativeName>
        <fullName evidence="1">Alpha-keto-beta-hydroxylacyl reductoisomerase</fullName>
    </alternativeName>
    <alternativeName>
        <fullName evidence="1">Ketol-acid reductoisomerase type 2</fullName>
    </alternativeName>
    <alternativeName>
        <fullName evidence="1">Ketol-acid reductoisomerase type II</fullName>
    </alternativeName>
</protein>
<accession>Q8ZAC2</accession>
<accession>Q0WAC4</accession>